<keyword id="KW-0479">Metal-binding</keyword>
<keyword id="KW-0687">Ribonucleoprotein</keyword>
<keyword id="KW-0689">Ribosomal protein</keyword>
<keyword id="KW-0694">RNA-binding</keyword>
<keyword id="KW-0699">rRNA-binding</keyword>
<keyword id="KW-0862">Zinc</keyword>
<evidence type="ECO:0000255" key="1">
    <source>
        <dbReference type="HAMAP-Rule" id="MF_00501"/>
    </source>
</evidence>
<evidence type="ECO:0000305" key="2"/>
<proteinExistence type="inferred from homology"/>
<sequence length="66" mass="7523">MKTGIHPNYKTVMVKCTCGNEFESGSVKEEIRVETCSECHPFYTGRQKFAEAGGRVDRFNKKYGLK</sequence>
<dbReference type="EMBL" id="AY702198">
    <property type="protein sequence ID" value="AAU09404.1"/>
    <property type="molecule type" value="Genomic_DNA"/>
</dbReference>
<dbReference type="RefSeq" id="WP_013085477.1">
    <property type="nucleotide sequence ID" value="NZ_WWFB01000005.1"/>
</dbReference>
<dbReference type="SMR" id="Q66V72"/>
<dbReference type="GeneID" id="93645631"/>
<dbReference type="GO" id="GO:1990904">
    <property type="term" value="C:ribonucleoprotein complex"/>
    <property type="evidence" value="ECO:0007669"/>
    <property type="project" value="UniProtKB-KW"/>
</dbReference>
<dbReference type="GO" id="GO:0005840">
    <property type="term" value="C:ribosome"/>
    <property type="evidence" value="ECO:0007669"/>
    <property type="project" value="UniProtKB-KW"/>
</dbReference>
<dbReference type="GO" id="GO:0046872">
    <property type="term" value="F:metal ion binding"/>
    <property type="evidence" value="ECO:0007669"/>
    <property type="project" value="UniProtKB-KW"/>
</dbReference>
<dbReference type="GO" id="GO:0019843">
    <property type="term" value="F:rRNA binding"/>
    <property type="evidence" value="ECO:0007669"/>
    <property type="project" value="UniProtKB-KW"/>
</dbReference>
<dbReference type="GO" id="GO:0003735">
    <property type="term" value="F:structural constituent of ribosome"/>
    <property type="evidence" value="ECO:0007669"/>
    <property type="project" value="InterPro"/>
</dbReference>
<dbReference type="GO" id="GO:0006412">
    <property type="term" value="P:translation"/>
    <property type="evidence" value="ECO:0007669"/>
    <property type="project" value="UniProtKB-UniRule"/>
</dbReference>
<dbReference type="Gene3D" id="4.10.830.30">
    <property type="entry name" value="Ribosomal protein L31"/>
    <property type="match status" value="1"/>
</dbReference>
<dbReference type="HAMAP" id="MF_00501">
    <property type="entry name" value="Ribosomal_bL31_1"/>
    <property type="match status" value="1"/>
</dbReference>
<dbReference type="InterPro" id="IPR034704">
    <property type="entry name" value="Ribosomal_bL28/bL31-like_sf"/>
</dbReference>
<dbReference type="InterPro" id="IPR002150">
    <property type="entry name" value="Ribosomal_bL31"/>
</dbReference>
<dbReference type="InterPro" id="IPR027491">
    <property type="entry name" value="Ribosomal_bL31_A"/>
</dbReference>
<dbReference type="InterPro" id="IPR042105">
    <property type="entry name" value="Ribosomal_bL31_sf"/>
</dbReference>
<dbReference type="NCBIfam" id="TIGR00105">
    <property type="entry name" value="L31"/>
    <property type="match status" value="1"/>
</dbReference>
<dbReference type="NCBIfam" id="NF000612">
    <property type="entry name" value="PRK00019.1"/>
    <property type="match status" value="1"/>
</dbReference>
<dbReference type="NCBIfam" id="NF001809">
    <property type="entry name" value="PRK00528.1"/>
    <property type="match status" value="1"/>
</dbReference>
<dbReference type="PANTHER" id="PTHR33280">
    <property type="entry name" value="50S RIBOSOMAL PROTEIN L31, CHLOROPLASTIC"/>
    <property type="match status" value="1"/>
</dbReference>
<dbReference type="PANTHER" id="PTHR33280:SF1">
    <property type="entry name" value="LARGE RIBOSOMAL SUBUNIT PROTEIN BL31C"/>
    <property type="match status" value="1"/>
</dbReference>
<dbReference type="Pfam" id="PF01197">
    <property type="entry name" value="Ribosomal_L31"/>
    <property type="match status" value="1"/>
</dbReference>
<dbReference type="PRINTS" id="PR01249">
    <property type="entry name" value="RIBOSOMALL31"/>
</dbReference>
<dbReference type="SUPFAM" id="SSF143800">
    <property type="entry name" value="L28p-like"/>
    <property type="match status" value="1"/>
</dbReference>
<dbReference type="PROSITE" id="PS01143">
    <property type="entry name" value="RIBOSOMAL_L31"/>
    <property type="match status" value="1"/>
</dbReference>
<accession>Q66V72</accession>
<gene>
    <name evidence="1" type="primary">rpmE</name>
</gene>
<reference key="1">
    <citation type="submission" date="2004-07" db="EMBL/GenBank/DDBJ databases">
        <title>Cloning and regulation of the Bacillus megaterium rho gene.</title>
        <authorList>
            <person name="Shaw G.-C."/>
            <person name="Wu M.-Y."/>
            <person name="Lee T.-R."/>
        </authorList>
    </citation>
    <scope>NUCLEOTIDE SEQUENCE [GENOMIC DNA]</scope>
</reference>
<feature type="chain" id="PRO_0000173078" description="Large ribosomal subunit protein bL31">
    <location>
        <begin position="1"/>
        <end position="66"/>
    </location>
</feature>
<feature type="binding site" evidence="1">
    <location>
        <position position="16"/>
    </location>
    <ligand>
        <name>Zn(2+)</name>
        <dbReference type="ChEBI" id="CHEBI:29105"/>
    </ligand>
</feature>
<feature type="binding site" evidence="1">
    <location>
        <position position="18"/>
    </location>
    <ligand>
        <name>Zn(2+)</name>
        <dbReference type="ChEBI" id="CHEBI:29105"/>
    </ligand>
</feature>
<feature type="binding site" evidence="1">
    <location>
        <position position="36"/>
    </location>
    <ligand>
        <name>Zn(2+)</name>
        <dbReference type="ChEBI" id="CHEBI:29105"/>
    </ligand>
</feature>
<feature type="binding site" evidence="1">
    <location>
        <position position="39"/>
    </location>
    <ligand>
        <name>Zn(2+)</name>
        <dbReference type="ChEBI" id="CHEBI:29105"/>
    </ligand>
</feature>
<protein>
    <recommendedName>
        <fullName evidence="1">Large ribosomal subunit protein bL31</fullName>
    </recommendedName>
    <alternativeName>
        <fullName evidence="2">50S ribosomal protein L31</fullName>
    </alternativeName>
</protein>
<name>RL31_PRIMG</name>
<organism>
    <name type="scientific">Priestia megaterium</name>
    <name type="common">Bacillus megaterium</name>
    <dbReference type="NCBI Taxonomy" id="1404"/>
    <lineage>
        <taxon>Bacteria</taxon>
        <taxon>Bacillati</taxon>
        <taxon>Bacillota</taxon>
        <taxon>Bacilli</taxon>
        <taxon>Bacillales</taxon>
        <taxon>Bacillaceae</taxon>
        <taxon>Priestia</taxon>
    </lineage>
</organism>
<comment type="function">
    <text evidence="1">Binds the 23S rRNA.</text>
</comment>
<comment type="cofactor">
    <cofactor evidence="1">
        <name>Zn(2+)</name>
        <dbReference type="ChEBI" id="CHEBI:29105"/>
    </cofactor>
    <text evidence="1">Binds 1 zinc ion per subunit.</text>
</comment>
<comment type="subunit">
    <text evidence="1">Part of the 50S ribosomal subunit.</text>
</comment>
<comment type="similarity">
    <text evidence="1">Belongs to the bacterial ribosomal protein bL31 family. Type A subfamily.</text>
</comment>